<reference key="1">
    <citation type="journal article" date="1998" name="Plant Physiol.">
        <title>Multiple genes encoding the conserved CCAAT-box transcription factor complex are expressed in Arabidopsis.</title>
        <authorList>
            <person name="Edwards D."/>
            <person name="Murray J.A.H."/>
            <person name="Smith A.G."/>
        </authorList>
    </citation>
    <scope>NUCLEOTIDE SEQUENCE [MRNA]</scope>
    <scope>TISSUE SPECIFICITY</scope>
</reference>
<reference key="2">
    <citation type="journal article" date="2000" name="Nature">
        <title>Sequence and analysis of chromosome 1 of the plant Arabidopsis thaliana.</title>
        <authorList>
            <person name="Theologis A."/>
            <person name="Ecker J.R."/>
            <person name="Palm C.J."/>
            <person name="Federspiel N.A."/>
            <person name="Kaul S."/>
            <person name="White O."/>
            <person name="Alonso J."/>
            <person name="Altafi H."/>
            <person name="Araujo R."/>
            <person name="Bowman C.L."/>
            <person name="Brooks S.Y."/>
            <person name="Buehler E."/>
            <person name="Chan A."/>
            <person name="Chao Q."/>
            <person name="Chen H."/>
            <person name="Cheuk R.F."/>
            <person name="Chin C.W."/>
            <person name="Chung M.K."/>
            <person name="Conn L."/>
            <person name="Conway A.B."/>
            <person name="Conway A.R."/>
            <person name="Creasy T.H."/>
            <person name="Dewar K."/>
            <person name="Dunn P."/>
            <person name="Etgu P."/>
            <person name="Feldblyum T.V."/>
            <person name="Feng J.-D."/>
            <person name="Fong B."/>
            <person name="Fujii C.Y."/>
            <person name="Gill J.E."/>
            <person name="Goldsmith A.D."/>
            <person name="Haas B."/>
            <person name="Hansen N.F."/>
            <person name="Hughes B."/>
            <person name="Huizar L."/>
            <person name="Hunter J.L."/>
            <person name="Jenkins J."/>
            <person name="Johnson-Hopson C."/>
            <person name="Khan S."/>
            <person name="Khaykin E."/>
            <person name="Kim C.J."/>
            <person name="Koo H.L."/>
            <person name="Kremenetskaia I."/>
            <person name="Kurtz D.B."/>
            <person name="Kwan A."/>
            <person name="Lam B."/>
            <person name="Langin-Hooper S."/>
            <person name="Lee A."/>
            <person name="Lee J.M."/>
            <person name="Lenz C.A."/>
            <person name="Li J.H."/>
            <person name="Li Y.-P."/>
            <person name="Lin X."/>
            <person name="Liu S.X."/>
            <person name="Liu Z.A."/>
            <person name="Luros J.S."/>
            <person name="Maiti R."/>
            <person name="Marziali A."/>
            <person name="Militscher J."/>
            <person name="Miranda M."/>
            <person name="Nguyen M."/>
            <person name="Nierman W.C."/>
            <person name="Osborne B.I."/>
            <person name="Pai G."/>
            <person name="Peterson J."/>
            <person name="Pham P.K."/>
            <person name="Rizzo M."/>
            <person name="Rooney T."/>
            <person name="Rowley D."/>
            <person name="Sakano H."/>
            <person name="Salzberg S.L."/>
            <person name="Schwartz J.R."/>
            <person name="Shinn P."/>
            <person name="Southwick A.M."/>
            <person name="Sun H."/>
            <person name="Tallon L.J."/>
            <person name="Tambunga G."/>
            <person name="Toriumi M.J."/>
            <person name="Town C.D."/>
            <person name="Utterback T."/>
            <person name="Van Aken S."/>
            <person name="Vaysberg M."/>
            <person name="Vysotskaia V.S."/>
            <person name="Walker M."/>
            <person name="Wu D."/>
            <person name="Yu G."/>
            <person name="Fraser C.M."/>
            <person name="Venter J.C."/>
            <person name="Davis R.W."/>
        </authorList>
    </citation>
    <scope>NUCLEOTIDE SEQUENCE [LARGE SCALE GENOMIC DNA]</scope>
    <source>
        <strain>cv. Columbia</strain>
    </source>
</reference>
<reference key="3">
    <citation type="journal article" date="2017" name="Plant J.">
        <title>Araport11: a complete reannotation of the Arabidopsis thaliana reference genome.</title>
        <authorList>
            <person name="Cheng C.Y."/>
            <person name="Krishnakumar V."/>
            <person name="Chan A.P."/>
            <person name="Thibaud-Nissen F."/>
            <person name="Schobel S."/>
            <person name="Town C.D."/>
        </authorList>
    </citation>
    <scope>GENOME REANNOTATION</scope>
    <source>
        <strain>cv. Columbia</strain>
    </source>
</reference>
<reference key="4">
    <citation type="journal article" date="2003" name="Science">
        <title>Empirical analysis of transcriptional activity in the Arabidopsis genome.</title>
        <authorList>
            <person name="Yamada K."/>
            <person name="Lim J."/>
            <person name="Dale J.M."/>
            <person name="Chen H."/>
            <person name="Shinn P."/>
            <person name="Palm C.J."/>
            <person name="Southwick A.M."/>
            <person name="Wu H.C."/>
            <person name="Kim C.J."/>
            <person name="Nguyen M."/>
            <person name="Pham P.K."/>
            <person name="Cheuk R.F."/>
            <person name="Karlin-Newmann G."/>
            <person name="Liu S.X."/>
            <person name="Lam B."/>
            <person name="Sakano H."/>
            <person name="Wu T."/>
            <person name="Yu G."/>
            <person name="Miranda M."/>
            <person name="Quach H.L."/>
            <person name="Tripp M."/>
            <person name="Chang C.H."/>
            <person name="Lee J.M."/>
            <person name="Toriumi M.J."/>
            <person name="Chan M.M."/>
            <person name="Tang C.C."/>
            <person name="Onodera C.S."/>
            <person name="Deng J.M."/>
            <person name="Akiyama K."/>
            <person name="Ansari Y."/>
            <person name="Arakawa T."/>
            <person name="Banh J."/>
            <person name="Banno F."/>
            <person name="Bowser L."/>
            <person name="Brooks S.Y."/>
            <person name="Carninci P."/>
            <person name="Chao Q."/>
            <person name="Choy N."/>
            <person name="Enju A."/>
            <person name="Goldsmith A.D."/>
            <person name="Gurjal M."/>
            <person name="Hansen N.F."/>
            <person name="Hayashizaki Y."/>
            <person name="Johnson-Hopson C."/>
            <person name="Hsuan V.W."/>
            <person name="Iida K."/>
            <person name="Karnes M."/>
            <person name="Khan S."/>
            <person name="Koesema E."/>
            <person name="Ishida J."/>
            <person name="Jiang P.X."/>
            <person name="Jones T."/>
            <person name="Kawai J."/>
            <person name="Kamiya A."/>
            <person name="Meyers C."/>
            <person name="Nakajima M."/>
            <person name="Narusaka M."/>
            <person name="Seki M."/>
            <person name="Sakurai T."/>
            <person name="Satou M."/>
            <person name="Tamse R."/>
            <person name="Vaysberg M."/>
            <person name="Wallender E.K."/>
            <person name="Wong C."/>
            <person name="Yamamura Y."/>
            <person name="Yuan S."/>
            <person name="Shinozaki K."/>
            <person name="Davis R.W."/>
            <person name="Theologis A."/>
            <person name="Ecker J.R."/>
        </authorList>
    </citation>
    <scope>NUCLEOTIDE SEQUENCE [LARGE SCALE MRNA]</scope>
    <source>
        <strain>cv. Columbia</strain>
    </source>
</reference>
<reference key="5">
    <citation type="journal article" date="2001" name="Gene">
        <title>Regulation of the CCAAT-binding NF-Y subunits in Arabidopsis thaliana.</title>
        <authorList>
            <person name="Gusmaroli G."/>
            <person name="Tonelli C."/>
            <person name="Mantovani R."/>
        </authorList>
    </citation>
    <scope>TISSUE SPECIFICITY</scope>
</reference>
<reference key="6">
    <citation type="journal article" date="2002" name="Gene">
        <title>Regulation of novel members of the Arabidopsis thaliana CCAAT-binding nuclear factor Y subunits.</title>
        <authorList>
            <person name="Gusmaroli G."/>
            <person name="Tonelli C."/>
            <person name="Mantovani R."/>
        </authorList>
    </citation>
    <scope>GENE FAMILY</scope>
    <scope>NOMENCLATURE</scope>
</reference>
<accession>Q93ZH2</accession>
<accession>O23632</accession>
<accession>Q9SSP3</accession>
<proteinExistence type="evidence at transcript level"/>
<sequence length="340" mass="37618">MMHQMLNKKDSATHSTLPYLNTSISWGVVPTDSVANRRGSAESLSLKVDSRPGHIQTTKQISFQDQDSSSTQSTGQSYTEVASSGDDNPSRQISFSAKSGSEITQRKGFASNPKQGSMTGFPNIHFAPAQANFSFHYADPHYGGLLAATYLPQAPTCNPQMVSMIPGRVPLPAELTETDPVFVNAKQYHAIMRRRQQRAKLEAQNKLIRARKPYLHESRHVHALKRPRGSGGRFLNTKKLLQESEQAAAREQEQDKLGQQVNRKTNMSRFEAHMLQNNKDRSSTTSGSDITSVSDGADIFGHTEFQFSGFPTPINRAMLVHGQSNDMHGGGDMHHFSVHI</sequence>
<evidence type="ECO:0000250" key="1"/>
<evidence type="ECO:0000255" key="2">
    <source>
        <dbReference type="PROSITE-ProRule" id="PRU00966"/>
    </source>
</evidence>
<evidence type="ECO:0000256" key="3">
    <source>
        <dbReference type="SAM" id="MobiDB-lite"/>
    </source>
</evidence>
<evidence type="ECO:0000269" key="4">
    <source>
    </source>
</evidence>
<evidence type="ECO:0000269" key="5">
    <source>
    </source>
</evidence>
<evidence type="ECO:0000305" key="6"/>
<organism>
    <name type="scientific">Arabidopsis thaliana</name>
    <name type="common">Mouse-ear cress</name>
    <dbReference type="NCBI Taxonomy" id="3702"/>
    <lineage>
        <taxon>Eukaryota</taxon>
        <taxon>Viridiplantae</taxon>
        <taxon>Streptophyta</taxon>
        <taxon>Embryophyta</taxon>
        <taxon>Tracheophyta</taxon>
        <taxon>Spermatophyta</taxon>
        <taxon>Magnoliopsida</taxon>
        <taxon>eudicotyledons</taxon>
        <taxon>Gunneridae</taxon>
        <taxon>Pentapetalae</taxon>
        <taxon>rosids</taxon>
        <taxon>malvids</taxon>
        <taxon>Brassicales</taxon>
        <taxon>Brassicaceae</taxon>
        <taxon>Camelineae</taxon>
        <taxon>Arabidopsis</taxon>
    </lineage>
</organism>
<name>NFYA3_ARATH</name>
<dbReference type="EMBL" id="Y13722">
    <property type="protein sequence ID" value="CAA74050.1"/>
    <property type="molecule type" value="mRNA"/>
</dbReference>
<dbReference type="EMBL" id="AC008017">
    <property type="protein sequence ID" value="AAD55630.1"/>
    <property type="molecule type" value="Genomic_DNA"/>
</dbReference>
<dbReference type="EMBL" id="AC010926">
    <property type="status" value="NOT_ANNOTATED_CDS"/>
    <property type="molecule type" value="Genomic_DNA"/>
</dbReference>
<dbReference type="EMBL" id="CP002684">
    <property type="protein sequence ID" value="AEE35378.1"/>
    <property type="molecule type" value="Genomic_DNA"/>
</dbReference>
<dbReference type="EMBL" id="AY057539">
    <property type="protein sequence ID" value="AAL09779.1"/>
    <property type="status" value="ALT_FRAME"/>
    <property type="molecule type" value="mRNA"/>
</dbReference>
<dbReference type="EMBL" id="AY140028">
    <property type="protein sequence ID" value="AAM98169.1"/>
    <property type="molecule type" value="mRNA"/>
</dbReference>
<dbReference type="EMBL" id="BT008825">
    <property type="protein sequence ID" value="AAP68264.1"/>
    <property type="molecule type" value="mRNA"/>
</dbReference>
<dbReference type="PIR" id="C96753">
    <property type="entry name" value="C96753"/>
</dbReference>
<dbReference type="RefSeq" id="NP_565049.1">
    <molecule id="Q93ZH2-1"/>
    <property type="nucleotide sequence ID" value="NM_105941.8"/>
</dbReference>
<dbReference type="SMR" id="Q93ZH2"/>
<dbReference type="BioGRID" id="28833">
    <property type="interactions" value="9"/>
</dbReference>
<dbReference type="FunCoup" id="Q93ZH2">
    <property type="interactions" value="86"/>
</dbReference>
<dbReference type="IntAct" id="Q93ZH2">
    <property type="interactions" value="2"/>
</dbReference>
<dbReference type="STRING" id="3702.Q93ZH2"/>
<dbReference type="GlyGen" id="Q93ZH2">
    <property type="glycosylation" value="1 site"/>
</dbReference>
<dbReference type="PaxDb" id="3702-AT1G72830.2"/>
<dbReference type="EnsemblPlants" id="AT1G72830.1">
    <molecule id="Q93ZH2-1"/>
    <property type="protein sequence ID" value="AT1G72830.1"/>
    <property type="gene ID" value="AT1G72830"/>
</dbReference>
<dbReference type="GeneID" id="843614"/>
<dbReference type="Gramene" id="AT1G72830.1">
    <molecule id="Q93ZH2-1"/>
    <property type="protein sequence ID" value="AT1G72830.1"/>
    <property type="gene ID" value="AT1G72830"/>
</dbReference>
<dbReference type="KEGG" id="ath:AT1G72830"/>
<dbReference type="Araport" id="AT1G72830"/>
<dbReference type="TAIR" id="AT1G72830">
    <property type="gene designation" value="NF-YA3"/>
</dbReference>
<dbReference type="eggNOG" id="KOG1561">
    <property type="taxonomic scope" value="Eukaryota"/>
</dbReference>
<dbReference type="InParanoid" id="Q93ZH2"/>
<dbReference type="PhylomeDB" id="Q93ZH2"/>
<dbReference type="PRO" id="PR:Q93ZH2"/>
<dbReference type="Proteomes" id="UP000006548">
    <property type="component" value="Chromosome 1"/>
</dbReference>
<dbReference type="ExpressionAtlas" id="Q93ZH2">
    <property type="expression patterns" value="baseline and differential"/>
</dbReference>
<dbReference type="GO" id="GO:0016602">
    <property type="term" value="C:CCAAT-binding factor complex"/>
    <property type="evidence" value="ECO:0007669"/>
    <property type="project" value="InterPro"/>
</dbReference>
<dbReference type="GO" id="GO:0003677">
    <property type="term" value="F:DNA binding"/>
    <property type="evidence" value="ECO:0007669"/>
    <property type="project" value="UniProtKB-KW"/>
</dbReference>
<dbReference type="GO" id="GO:0003700">
    <property type="term" value="F:DNA-binding transcription factor activity"/>
    <property type="evidence" value="ECO:0007669"/>
    <property type="project" value="InterPro"/>
</dbReference>
<dbReference type="Gene3D" id="6.10.250.2430">
    <property type="match status" value="1"/>
</dbReference>
<dbReference type="InterPro" id="IPR018362">
    <property type="entry name" value="CCAAT-binding_factor_CS"/>
</dbReference>
<dbReference type="InterPro" id="IPR001289">
    <property type="entry name" value="NFYA"/>
</dbReference>
<dbReference type="PANTHER" id="PTHR12632">
    <property type="entry name" value="TRANSCRIPTION FACTOR NF-Y ALPHA-RELATED"/>
    <property type="match status" value="1"/>
</dbReference>
<dbReference type="Pfam" id="PF02045">
    <property type="entry name" value="CBFB_NFYA"/>
    <property type="match status" value="1"/>
</dbReference>
<dbReference type="PRINTS" id="PR00616">
    <property type="entry name" value="CCAATSUBUNTB"/>
</dbReference>
<dbReference type="SMART" id="SM00521">
    <property type="entry name" value="CBF"/>
    <property type="match status" value="1"/>
</dbReference>
<dbReference type="PROSITE" id="PS00686">
    <property type="entry name" value="NFYA_HAP2_1"/>
    <property type="match status" value="1"/>
</dbReference>
<dbReference type="PROSITE" id="PS51152">
    <property type="entry name" value="NFYA_HAP2_2"/>
    <property type="match status" value="1"/>
</dbReference>
<gene>
    <name type="primary">NFYA3</name>
    <name type="synonym">HAP2C</name>
    <name type="ordered locus">At1g72830</name>
    <name type="ORF">F28P22.32</name>
    <name type="ORF">F3N23.3</name>
</gene>
<feature type="chain" id="PRO_0000198773" description="Nuclear transcription factor Y subunit A-3">
    <location>
        <begin position="1"/>
        <end position="340"/>
    </location>
</feature>
<feature type="DNA-binding region" description="NFYA/HAP2-type" evidence="2">
    <location>
        <begin position="212"/>
        <end position="237"/>
    </location>
</feature>
<feature type="region of interest" description="Disordered" evidence="3">
    <location>
        <begin position="43"/>
        <end position="116"/>
    </location>
</feature>
<feature type="short sequence motif" description="Subunit association domain (SAD)">
    <location>
        <begin position="182"/>
        <end position="205"/>
    </location>
</feature>
<feature type="compositionally biased region" description="Low complexity" evidence="3">
    <location>
        <begin position="60"/>
        <end position="77"/>
    </location>
</feature>
<feature type="compositionally biased region" description="Polar residues" evidence="3">
    <location>
        <begin position="78"/>
        <end position="103"/>
    </location>
</feature>
<feature type="sequence conflict" description="In Ref. 1; CAA74050." evidence="6" ref="1">
    <original>S</original>
    <variation>P</variation>
    <location>
        <position position="40"/>
    </location>
</feature>
<feature type="sequence conflict" description="In Ref. 4; AAL09779." evidence="6" ref="4">
    <original>I</original>
    <variation>M</variation>
    <location>
        <position position="340"/>
    </location>
</feature>
<comment type="function">
    <text evidence="1">Stimulates the transcription of various genes by recognizing and binding to a CCAAT motif in promoters.</text>
</comment>
<comment type="subunit">
    <text evidence="1">Heterotrimeric transcription factor composed of three components, NF-YA, NF-YB and NF-YC. NF-YB and NF-YC must interact and dimerize for NF-YA association and DNA binding (By similarity).</text>
</comment>
<comment type="subcellular location">
    <subcellularLocation>
        <location evidence="6">Nucleus</location>
    </subcellularLocation>
</comment>
<comment type="alternative products">
    <event type="alternative splicing"/>
    <isoform>
        <id>Q93ZH2-1</id>
        <name>1</name>
        <sequence type="displayed"/>
    </isoform>
    <text>A number of isoforms are produced. According to EST sequences.</text>
</comment>
<comment type="tissue specificity">
    <text evidence="4 5">Ubiquitous.</text>
</comment>
<comment type="similarity">
    <text evidence="2">Belongs to the NFYA/HAP2 subunit family.</text>
</comment>
<comment type="sequence caution" evidence="6">
    <conflict type="frameshift">
        <sequence resource="EMBL-CDS" id="AAL09779"/>
    </conflict>
</comment>
<protein>
    <recommendedName>
        <fullName>Nuclear transcription factor Y subunit A-3</fullName>
        <shortName>AtNF-YA-3</shortName>
    </recommendedName>
    <alternativeName>
        <fullName>Transcriptional activator HAP2C</fullName>
    </alternativeName>
</protein>
<keyword id="KW-0010">Activator</keyword>
<keyword id="KW-0025">Alternative splicing</keyword>
<keyword id="KW-0238">DNA-binding</keyword>
<keyword id="KW-0539">Nucleus</keyword>
<keyword id="KW-1185">Reference proteome</keyword>
<keyword id="KW-0804">Transcription</keyword>
<keyword id="KW-0805">Transcription regulation</keyword>